<gene>
    <name evidence="1" type="primary">argH</name>
    <name type="ordered locus">Rpic_2577</name>
</gene>
<name>ARLY_RALPJ</name>
<evidence type="ECO:0000255" key="1">
    <source>
        <dbReference type="HAMAP-Rule" id="MF_00006"/>
    </source>
</evidence>
<accession>B2UA10</accession>
<keyword id="KW-0028">Amino-acid biosynthesis</keyword>
<keyword id="KW-0055">Arginine biosynthesis</keyword>
<keyword id="KW-0963">Cytoplasm</keyword>
<keyword id="KW-0456">Lyase</keyword>
<reference key="1">
    <citation type="submission" date="2008-05" db="EMBL/GenBank/DDBJ databases">
        <title>Complete sequence of chromosome 1 of Ralstonia pickettii 12J.</title>
        <authorList>
            <person name="Lucas S."/>
            <person name="Copeland A."/>
            <person name="Lapidus A."/>
            <person name="Glavina del Rio T."/>
            <person name="Dalin E."/>
            <person name="Tice H."/>
            <person name="Bruce D."/>
            <person name="Goodwin L."/>
            <person name="Pitluck S."/>
            <person name="Meincke L."/>
            <person name="Brettin T."/>
            <person name="Detter J.C."/>
            <person name="Han C."/>
            <person name="Kuske C.R."/>
            <person name="Schmutz J."/>
            <person name="Larimer F."/>
            <person name="Land M."/>
            <person name="Hauser L."/>
            <person name="Kyrpides N."/>
            <person name="Mikhailova N."/>
            <person name="Marsh T."/>
            <person name="Richardson P."/>
        </authorList>
    </citation>
    <scope>NUCLEOTIDE SEQUENCE [LARGE SCALE GENOMIC DNA]</scope>
    <source>
        <strain>12J</strain>
    </source>
</reference>
<organism>
    <name type="scientific">Ralstonia pickettii (strain 12J)</name>
    <dbReference type="NCBI Taxonomy" id="402626"/>
    <lineage>
        <taxon>Bacteria</taxon>
        <taxon>Pseudomonadati</taxon>
        <taxon>Pseudomonadota</taxon>
        <taxon>Betaproteobacteria</taxon>
        <taxon>Burkholderiales</taxon>
        <taxon>Burkholderiaceae</taxon>
        <taxon>Ralstonia</taxon>
    </lineage>
</organism>
<feature type="chain" id="PRO_1000089107" description="Argininosuccinate lyase">
    <location>
        <begin position="1"/>
        <end position="471"/>
    </location>
</feature>
<sequence>MTSQLAKKAEAWSARFNEPVSDLVKRYTASVFFDKRLALFDIQGSLAHAAMLAKQGIIAEADRAAIEQGMAQIRQEIEAGTFEWKLDLEDVHLNIEARLTAMAGDAGKRLHTGRSRNDQVATDIRLWLRSEIDNIVGLLKALRGALLDLAEQHTNTIVPGFTHLQVAQPVVFGHHLLAYVEMFTRDTERMLDARRRVNRLPLGAAALAGTSYPIDREFVAQQLGFEGVCRNSLDAVSDRDFAIEFCAAAALIMTHVSRFSEELVLWMSPRVGFIDIADRFCTGSSIMPQKKNPDVPELARGKTGRVNGHLIGLLTLMKGQPLAYNKDNQEDKEPLFDTVDTVVDTLRIFADMVPGITVKADAMRAAALQGYATATDLADYLVKRGLPFRDAHEAVAHAVRACDDLRCDLADLSVAQLRDICGLGDKANLIGDDVHTVLTLEGSVASRNHIGGTAPEQVKQAIAFARAALAE</sequence>
<comment type="catalytic activity">
    <reaction evidence="1">
        <text>2-(N(omega)-L-arginino)succinate = fumarate + L-arginine</text>
        <dbReference type="Rhea" id="RHEA:24020"/>
        <dbReference type="ChEBI" id="CHEBI:29806"/>
        <dbReference type="ChEBI" id="CHEBI:32682"/>
        <dbReference type="ChEBI" id="CHEBI:57472"/>
        <dbReference type="EC" id="4.3.2.1"/>
    </reaction>
</comment>
<comment type="pathway">
    <text evidence="1">Amino-acid biosynthesis; L-arginine biosynthesis; L-arginine from L-ornithine and carbamoyl phosphate: step 3/3.</text>
</comment>
<comment type="subcellular location">
    <subcellularLocation>
        <location evidence="1">Cytoplasm</location>
    </subcellularLocation>
</comment>
<comment type="similarity">
    <text evidence="1">Belongs to the lyase 1 family. Argininosuccinate lyase subfamily.</text>
</comment>
<protein>
    <recommendedName>
        <fullName evidence="1">Argininosuccinate lyase</fullName>
        <shortName evidence="1">ASAL</shortName>
        <ecNumber evidence="1">4.3.2.1</ecNumber>
    </recommendedName>
    <alternativeName>
        <fullName evidence="1">Arginosuccinase</fullName>
    </alternativeName>
</protein>
<proteinExistence type="inferred from homology"/>
<dbReference type="EC" id="4.3.2.1" evidence="1"/>
<dbReference type="EMBL" id="CP001068">
    <property type="protein sequence ID" value="ACD27704.1"/>
    <property type="molecule type" value="Genomic_DNA"/>
</dbReference>
<dbReference type="SMR" id="B2UA10"/>
<dbReference type="STRING" id="402626.Rpic_2577"/>
<dbReference type="KEGG" id="rpi:Rpic_2577"/>
<dbReference type="eggNOG" id="COG0165">
    <property type="taxonomic scope" value="Bacteria"/>
</dbReference>
<dbReference type="HOGENOM" id="CLU_027272_2_3_4"/>
<dbReference type="UniPathway" id="UPA00068">
    <property type="reaction ID" value="UER00114"/>
</dbReference>
<dbReference type="GO" id="GO:0005829">
    <property type="term" value="C:cytosol"/>
    <property type="evidence" value="ECO:0007669"/>
    <property type="project" value="TreeGrafter"/>
</dbReference>
<dbReference type="GO" id="GO:0004056">
    <property type="term" value="F:argininosuccinate lyase activity"/>
    <property type="evidence" value="ECO:0007669"/>
    <property type="project" value="UniProtKB-UniRule"/>
</dbReference>
<dbReference type="GO" id="GO:0042450">
    <property type="term" value="P:arginine biosynthetic process via ornithine"/>
    <property type="evidence" value="ECO:0007669"/>
    <property type="project" value="InterPro"/>
</dbReference>
<dbReference type="GO" id="GO:0006526">
    <property type="term" value="P:L-arginine biosynthetic process"/>
    <property type="evidence" value="ECO:0007669"/>
    <property type="project" value="UniProtKB-UniRule"/>
</dbReference>
<dbReference type="CDD" id="cd01359">
    <property type="entry name" value="Argininosuccinate_lyase"/>
    <property type="match status" value="1"/>
</dbReference>
<dbReference type="FunFam" id="1.10.275.10:FF:000002">
    <property type="entry name" value="Argininosuccinate lyase"/>
    <property type="match status" value="1"/>
</dbReference>
<dbReference type="FunFam" id="1.10.40.30:FF:000001">
    <property type="entry name" value="Argininosuccinate lyase"/>
    <property type="match status" value="1"/>
</dbReference>
<dbReference type="FunFam" id="1.20.200.10:FF:000015">
    <property type="entry name" value="argininosuccinate lyase isoform X2"/>
    <property type="match status" value="1"/>
</dbReference>
<dbReference type="Gene3D" id="1.10.40.30">
    <property type="entry name" value="Fumarase/aspartase (C-terminal domain)"/>
    <property type="match status" value="1"/>
</dbReference>
<dbReference type="Gene3D" id="1.20.200.10">
    <property type="entry name" value="Fumarase/aspartase (Central domain)"/>
    <property type="match status" value="1"/>
</dbReference>
<dbReference type="Gene3D" id="1.10.275.10">
    <property type="entry name" value="Fumarase/aspartase (N-terminal domain)"/>
    <property type="match status" value="1"/>
</dbReference>
<dbReference type="HAMAP" id="MF_00006">
    <property type="entry name" value="Arg_succ_lyase"/>
    <property type="match status" value="1"/>
</dbReference>
<dbReference type="InterPro" id="IPR029419">
    <property type="entry name" value="Arg_succ_lyase_C"/>
</dbReference>
<dbReference type="InterPro" id="IPR009049">
    <property type="entry name" value="Argininosuccinate_lyase"/>
</dbReference>
<dbReference type="InterPro" id="IPR024083">
    <property type="entry name" value="Fumarase/histidase_N"/>
</dbReference>
<dbReference type="InterPro" id="IPR020557">
    <property type="entry name" value="Fumarate_lyase_CS"/>
</dbReference>
<dbReference type="InterPro" id="IPR000362">
    <property type="entry name" value="Fumarate_lyase_fam"/>
</dbReference>
<dbReference type="InterPro" id="IPR022761">
    <property type="entry name" value="Fumarate_lyase_N"/>
</dbReference>
<dbReference type="InterPro" id="IPR008948">
    <property type="entry name" value="L-Aspartase-like"/>
</dbReference>
<dbReference type="NCBIfam" id="TIGR00838">
    <property type="entry name" value="argH"/>
    <property type="match status" value="1"/>
</dbReference>
<dbReference type="PANTHER" id="PTHR43814">
    <property type="entry name" value="ARGININOSUCCINATE LYASE"/>
    <property type="match status" value="1"/>
</dbReference>
<dbReference type="PANTHER" id="PTHR43814:SF1">
    <property type="entry name" value="ARGININOSUCCINATE LYASE"/>
    <property type="match status" value="1"/>
</dbReference>
<dbReference type="Pfam" id="PF14698">
    <property type="entry name" value="ASL_C2"/>
    <property type="match status" value="1"/>
</dbReference>
<dbReference type="Pfam" id="PF00206">
    <property type="entry name" value="Lyase_1"/>
    <property type="match status" value="1"/>
</dbReference>
<dbReference type="PRINTS" id="PR00145">
    <property type="entry name" value="ARGSUCLYASE"/>
</dbReference>
<dbReference type="PRINTS" id="PR00149">
    <property type="entry name" value="FUMRATELYASE"/>
</dbReference>
<dbReference type="SUPFAM" id="SSF48557">
    <property type="entry name" value="L-aspartase-like"/>
    <property type="match status" value="1"/>
</dbReference>
<dbReference type="PROSITE" id="PS00163">
    <property type="entry name" value="FUMARATE_LYASES"/>
    <property type="match status" value="1"/>
</dbReference>